<gene>
    <name type="primary">RL1</name>
    <name type="synonym">ICP34.5</name>
</gene>
<comment type="function">
    <text evidence="1">Plays essential roles in viral nuclear egress to mediate capsid transit across the nuclear membrane and also in the inhibition of host immune response and integrated stress response (ISR). Facilitates nuclear egress cooperatively with host C1QBP and protein kinase C/PKC to induce lamin A/C phosphorylation and subsequent reorganization. In turn, lamina disassembles and nuclear egress occurs. Recruits the serine/threonine-protein phosphatase PPP1CA/PP1-alpha to dephosphorylate the translation initiation factor EIF2S1/eIF-2alpha, thereby couteracting the host shutoff of protein synthesis involving double-stranded RNA-dependent protein kinase EIF2AK2/PKR. Also down-modulates the host MHC class II proteins cell surface expression. Acts as a neurovirulence factor that has a profound effect on the growth of the virus in central nervous system tissue, probably through its ability to maintain an environment favorable for viral replication (By similarity).</text>
</comment>
<comment type="subunit">
    <text evidence="3">Interacts with host PPP1CA to form a high-molecular-weight complex that dephosphorylates EIF2S1/eIF-2alpha. Interacts with host EIF2S1/eIF-2alpha; this interaction is crucial for the specific dephosphorylation of EIF2S1/eIF-2alpha by PPP1CA.</text>
</comment>
<comment type="subcellular location">
    <subcellularLocation>
        <location evidence="1">Host cytoplasm</location>
    </subcellularLocation>
    <subcellularLocation>
        <location evidence="1">Host nucleus</location>
        <location evidence="1">Host nucleolus</location>
    </subcellularLocation>
    <subcellularLocation>
        <location evidence="1">Virion</location>
    </subcellularLocation>
    <text evidence="1">At early times in infection, colocalizes with PCNA and replication proteins in cell nuclei, before accumulating in the cytoplasm by 8 to 12 hours post-infection. The effects on the host cell are probably mediated by de novo-synthesized ICP34.5, the virion-derived population being either non-functional or present in very low amounts (By similarity).</text>
</comment>
<comment type="miscellaneous">
    <text evidence="1">ICP34.5 is detected as early as 3 hpi prior to viral replication but reaches maximal levels late in infection. ICP34.5 gene is therefore classified as gamma-1 or leaky late gene (By similarity).</text>
</comment>
<comment type="similarity">
    <text evidence="5">Belongs to the PPP1R15 family.</text>
</comment>
<feature type="chain" id="PRO_0000116339" description="Neurovirulence factor ICP34.5">
    <location>
        <begin position="1"/>
        <end position="261"/>
    </location>
</feature>
<feature type="repeat">
    <location>
        <begin position="3"/>
        <end position="7"/>
    </location>
</feature>
<feature type="repeat">
    <location>
        <begin position="8"/>
        <end position="12"/>
    </location>
</feature>
<feature type="repeat">
    <location>
        <begin position="16"/>
        <end position="23"/>
    </location>
</feature>
<feature type="repeat">
    <location>
        <begin position="24"/>
        <end position="31"/>
    </location>
</feature>
<feature type="region of interest" description="Disordered" evidence="4">
    <location>
        <begin position="1"/>
        <end position="59"/>
    </location>
</feature>
<feature type="region of interest" description="Required for nucleolar localization" evidence="1">
    <location>
        <begin position="1"/>
        <end position="19"/>
    </location>
</feature>
<feature type="region of interest" description="2 X 5 AA tandem repeats of R-R-R-G-P">
    <location>
        <begin position="3"/>
        <end position="12"/>
    </location>
</feature>
<feature type="region of interest" description="2 X 8 AA tandem repeats of P-R-P-G-A-P-A-V">
    <location>
        <begin position="16"/>
        <end position="31"/>
    </location>
</feature>
<feature type="region of interest" description="Disordered" evidence="4">
    <location>
        <begin position="75"/>
        <end position="135"/>
    </location>
</feature>
<feature type="region of interest" description="Disordered" evidence="4">
    <location>
        <begin position="145"/>
        <end position="164"/>
    </location>
</feature>
<feature type="region of interest" description="Binding to PP1CA" evidence="1">
    <location>
        <begin position="163"/>
        <end position="176"/>
    </location>
</feature>
<feature type="region of interest" description="Interaction with host PPP1CA" evidence="2">
    <location>
        <begin position="163"/>
        <end position="176"/>
    </location>
</feature>
<feature type="region of interest" description="Important for interferon resistance" evidence="1">
    <location>
        <begin position="178"/>
        <end position="261"/>
    </location>
</feature>
<feature type="region of interest" description="Interaction with host EIF2S1/EIF-2ALPHA" evidence="2">
    <location>
        <begin position="206"/>
        <end position="221"/>
    </location>
</feature>
<feature type="region of interest" description="Disordered" evidence="4">
    <location>
        <begin position="223"/>
        <end position="261"/>
    </location>
</feature>
<feature type="short sequence motif" description="Nuclear export signal" evidence="1">
    <location>
        <begin position="128"/>
        <end position="137"/>
    </location>
</feature>
<feature type="short sequence motif" description="Bipartite nuclear localization signal" evidence="1">
    <location>
        <begin position="188"/>
        <end position="206"/>
    </location>
</feature>
<feature type="compositionally biased region" description="Basic residues" evidence="4">
    <location>
        <begin position="1"/>
        <end position="17"/>
    </location>
</feature>
<feature type="compositionally biased region" description="Pro residues" evidence="4">
    <location>
        <begin position="18"/>
        <end position="32"/>
    </location>
</feature>
<feature type="compositionally biased region" description="Acidic residues" evidence="4">
    <location>
        <begin position="75"/>
        <end position="88"/>
    </location>
</feature>
<feature type="compositionally biased region" description="Low complexity" evidence="4">
    <location>
        <begin position="101"/>
        <end position="111"/>
    </location>
</feature>
<feature type="compositionally biased region" description="Low complexity" evidence="4">
    <location>
        <begin position="244"/>
        <end position="261"/>
    </location>
</feature>
<evidence type="ECO:0000250" key="1"/>
<evidence type="ECO:0000250" key="2">
    <source>
        <dbReference type="UniProtKB" id="P08353"/>
    </source>
</evidence>
<evidence type="ECO:0000250" key="3">
    <source>
        <dbReference type="UniProtKB" id="P36313"/>
    </source>
</evidence>
<evidence type="ECO:0000256" key="4">
    <source>
        <dbReference type="SAM" id="MobiDB-lite"/>
    </source>
</evidence>
<evidence type="ECO:0000305" key="5"/>
<keyword id="KW-1035">Host cytoplasm</keyword>
<keyword id="KW-1048">Host nucleus</keyword>
<keyword id="KW-0945">Host-virus interaction</keyword>
<keyword id="KW-1083">Inhibition of host autophagy by virus</keyword>
<keyword id="KW-1090">Inhibition of host innate immune response by virus</keyword>
<keyword id="KW-1114">Inhibition of host interferon signaling pathway by virus</keyword>
<keyword id="KW-1113">Inhibition of host RLR pathway by virus</keyword>
<keyword id="KW-0922">Interferon antiviral system evasion</keyword>
<keyword id="KW-1126">Modulation of host PP1 activity by virus</keyword>
<keyword id="KW-1185">Reference proteome</keyword>
<keyword id="KW-0677">Repeat</keyword>
<keyword id="KW-0899">Viral immunoevasion</keyword>
<keyword id="KW-0946">Virion</keyword>
<keyword id="KW-0843">Virulence</keyword>
<dbReference type="EMBL" id="D10471">
    <property type="protein sequence ID" value="BAA23428.1"/>
    <property type="molecule type" value="Genomic_DNA"/>
</dbReference>
<dbReference type="EMBL" id="Z86099">
    <property type="protein sequence ID" value="CAB06759.1"/>
    <property type="molecule type" value="Genomic_DNA"/>
</dbReference>
<dbReference type="EMBL" id="Z86099">
    <property type="protein sequence ID" value="CAB06706.1"/>
    <property type="molecule type" value="Genomic_DNA"/>
</dbReference>
<dbReference type="PIR" id="JQ1502">
    <property type="entry name" value="WMBEXE"/>
</dbReference>
<dbReference type="RefSeq" id="YP_009137150.1">
    <property type="nucleotide sequence ID" value="NC_001798.2"/>
</dbReference>
<dbReference type="RefSeq" id="YP_009137211.1">
    <property type="nucleotide sequence ID" value="NC_001798.2"/>
</dbReference>
<dbReference type="DNASU" id="1487286"/>
<dbReference type="GeneID" id="1487286"/>
<dbReference type="GeneID" id="1487287"/>
<dbReference type="KEGG" id="vg:1487286"/>
<dbReference type="KEGG" id="vg:1487287"/>
<dbReference type="Proteomes" id="UP000001874">
    <property type="component" value="Segment"/>
</dbReference>
<dbReference type="GO" id="GO:0030430">
    <property type="term" value="C:host cell cytoplasm"/>
    <property type="evidence" value="ECO:0007669"/>
    <property type="project" value="UniProtKB-SubCell"/>
</dbReference>
<dbReference type="GO" id="GO:0044196">
    <property type="term" value="C:host cell nucleolus"/>
    <property type="evidence" value="ECO:0007669"/>
    <property type="project" value="UniProtKB-SubCell"/>
</dbReference>
<dbReference type="GO" id="GO:0044423">
    <property type="term" value="C:virion component"/>
    <property type="evidence" value="ECO:0007669"/>
    <property type="project" value="UniProtKB-KW"/>
</dbReference>
<dbReference type="GO" id="GO:0004865">
    <property type="term" value="F:protein serine/threonine phosphatase inhibitor activity"/>
    <property type="evidence" value="ECO:0007669"/>
    <property type="project" value="UniProtKB-KW"/>
</dbReference>
<dbReference type="GO" id="GO:0034976">
    <property type="term" value="P:response to endoplasmic reticulum stress"/>
    <property type="evidence" value="ECO:0007669"/>
    <property type="project" value="TreeGrafter"/>
</dbReference>
<dbReference type="GO" id="GO:0140321">
    <property type="term" value="P:symbiont-mediated suppression of host autophagy"/>
    <property type="evidence" value="ECO:0007669"/>
    <property type="project" value="UniProtKB-KW"/>
</dbReference>
<dbReference type="GO" id="GO:0052170">
    <property type="term" value="P:symbiont-mediated suppression of host innate immune response"/>
    <property type="evidence" value="ECO:0007669"/>
    <property type="project" value="UniProtKB-KW"/>
</dbReference>
<dbReference type="GO" id="GO:0039606">
    <property type="term" value="P:symbiont-mediated suppression of host translation initiation"/>
    <property type="evidence" value="ECO:0007669"/>
    <property type="project" value="UniProtKB-KW"/>
</dbReference>
<dbReference type="GO" id="GO:0039502">
    <property type="term" value="P:symbiont-mediated suppression of host type I interferon-mediated signaling pathway"/>
    <property type="evidence" value="ECO:0007669"/>
    <property type="project" value="UniProtKB-KW"/>
</dbReference>
<dbReference type="InterPro" id="IPR051254">
    <property type="entry name" value="PPP1R15"/>
</dbReference>
<dbReference type="PANTHER" id="PTHR16489">
    <property type="entry name" value="GH11727P"/>
    <property type="match status" value="1"/>
</dbReference>
<dbReference type="PANTHER" id="PTHR16489:SF14">
    <property type="entry name" value="PROTEIN PHOSPHATASE 1 REGULATORY SUBUNIT 15A"/>
    <property type="match status" value="1"/>
</dbReference>
<reference key="1">
    <citation type="journal article" date="1991" name="J. Gen. Virol.">
        <title>Comparative sequence analysis of the long repeat regions and adjoining parts of the long unique regions in the genomes of herpes simplex viruses types 1 and 2.</title>
        <authorList>
            <person name="McGeoch D.J."/>
            <person name="Cunningham C."/>
            <person name="McIntyre G."/>
            <person name="Dolan A."/>
        </authorList>
    </citation>
    <scope>NUCLEOTIDE SEQUENCE [GENOMIC DNA]</scope>
</reference>
<reference key="2">
    <citation type="journal article" date="1998" name="J. Virol.">
        <title>The genome sequence of herpes simplex virus type 2.</title>
        <authorList>
            <person name="Dolan A."/>
            <person name="Jamieson F.E."/>
            <person name="Cunningham C."/>
            <person name="Barnett B.C."/>
            <person name="McGeoch D.J."/>
        </authorList>
    </citation>
    <scope>NUCLEOTIDE SEQUENCE [LARGE SCALE GENOMIC DNA]</scope>
</reference>
<proteinExistence type="inferred from homology"/>
<organism>
    <name type="scientific">Human herpesvirus 2 (strain HG52)</name>
    <name type="common">HHV-2</name>
    <name type="synonym">Human herpes simplex virus 2</name>
    <dbReference type="NCBI Taxonomy" id="10315"/>
    <lineage>
        <taxon>Viruses</taxon>
        <taxon>Duplodnaviria</taxon>
        <taxon>Heunggongvirae</taxon>
        <taxon>Peploviricota</taxon>
        <taxon>Herviviricetes</taxon>
        <taxon>Herpesvirales</taxon>
        <taxon>Orthoherpesviridae</taxon>
        <taxon>Alphaherpesvirinae</taxon>
        <taxon>Simplexvirus</taxon>
        <taxon>Simplexvirus humanalpha2</taxon>
        <taxon>Human herpesvirus 2</taxon>
    </lineage>
</organism>
<organismHost>
    <name type="scientific">Homo sapiens</name>
    <name type="common">Human</name>
    <dbReference type="NCBI Taxonomy" id="9606"/>
</organismHost>
<sequence>MSRRRGPRRRGPRRRPRPGAPAVPRPGAPAVPRPGALPTADSQMVPAYDSGTAVESAPAASSLLRRWLLVPQADDSDDADYAGNDDAEWANSPPSEGGGKAPEAPHAAPAAACPPPPPRKERGPQRPLPPHLALRLRTTTEYLARLSLRRRRPPASPPADAPRGKVCFSPRVQVRHLVAWETAARLARRGSWARERADRDRFRRRVAAAEAVIGPCLEPEARARARARARAHEDGGPAEEEEAAAAARGSSAAAGPGRRAV</sequence>
<name>ICP34_HHV2H</name>
<accession>P28283</accession>
<protein>
    <recommendedName>
        <fullName>Neurovirulence factor ICP34.5</fullName>
    </recommendedName>
    <alternativeName>
        <fullName>Infected cell protein 34.5</fullName>
    </alternativeName>
    <alternativeName>
        <fullName>protein gamma(1)34.5</fullName>
    </alternativeName>
</protein>